<evidence type="ECO:0000255" key="1">
    <source>
        <dbReference type="HAMAP-Rule" id="MF_01368"/>
    </source>
</evidence>
<evidence type="ECO:0000305" key="2"/>
<name>RL17_PARXL</name>
<comment type="subunit">
    <text evidence="1">Part of the 50S ribosomal subunit. Contacts protein L32.</text>
</comment>
<comment type="similarity">
    <text evidence="1">Belongs to the bacterial ribosomal protein bL17 family.</text>
</comment>
<accession>Q13TJ7</accession>
<organism>
    <name type="scientific">Paraburkholderia xenovorans (strain LB400)</name>
    <dbReference type="NCBI Taxonomy" id="266265"/>
    <lineage>
        <taxon>Bacteria</taxon>
        <taxon>Pseudomonadati</taxon>
        <taxon>Pseudomonadota</taxon>
        <taxon>Betaproteobacteria</taxon>
        <taxon>Burkholderiales</taxon>
        <taxon>Burkholderiaceae</taxon>
        <taxon>Paraburkholderia</taxon>
    </lineage>
</organism>
<feature type="chain" id="PRO_0000267849" description="Large ribosomal subunit protein bL17">
    <location>
        <begin position="1"/>
        <end position="130"/>
    </location>
</feature>
<proteinExistence type="inferred from homology"/>
<sequence length="130" mass="14995">MRHRHGLRKLNRTSSHRLAMLRNMSNSLIEHEVIKTTLPKAKELRKVVEPLITLGKKPSLANRRLAFNRLRDRDSVTKLFEVLGPRYATRPGGYLRVLKFGFRVGDNAPMALVELLDRPEVEEVEVQEAE</sequence>
<gene>
    <name evidence="1" type="primary">rplQ</name>
    <name type="ordered locus">Bxeno_A4054</name>
    <name type="ORF">Bxe_A0341</name>
</gene>
<dbReference type="EMBL" id="CP000270">
    <property type="protein sequence ID" value="ABE32592.1"/>
    <property type="molecule type" value="Genomic_DNA"/>
</dbReference>
<dbReference type="RefSeq" id="WP_006052227.1">
    <property type="nucleotide sequence ID" value="NZ_CP008760.1"/>
</dbReference>
<dbReference type="SMR" id="Q13TJ7"/>
<dbReference type="STRING" id="266265.Bxe_A0341"/>
<dbReference type="GeneID" id="97311019"/>
<dbReference type="KEGG" id="bxb:DR64_2511"/>
<dbReference type="KEGG" id="bxe:Bxe_A0341"/>
<dbReference type="eggNOG" id="COG0203">
    <property type="taxonomic scope" value="Bacteria"/>
</dbReference>
<dbReference type="OrthoDB" id="9809073at2"/>
<dbReference type="Proteomes" id="UP000001817">
    <property type="component" value="Chromosome 1"/>
</dbReference>
<dbReference type="GO" id="GO:0022625">
    <property type="term" value="C:cytosolic large ribosomal subunit"/>
    <property type="evidence" value="ECO:0007669"/>
    <property type="project" value="TreeGrafter"/>
</dbReference>
<dbReference type="GO" id="GO:0003735">
    <property type="term" value="F:structural constituent of ribosome"/>
    <property type="evidence" value="ECO:0007669"/>
    <property type="project" value="InterPro"/>
</dbReference>
<dbReference type="GO" id="GO:0006412">
    <property type="term" value="P:translation"/>
    <property type="evidence" value="ECO:0007669"/>
    <property type="project" value="UniProtKB-UniRule"/>
</dbReference>
<dbReference type="FunFam" id="3.90.1030.10:FF:000001">
    <property type="entry name" value="50S ribosomal protein L17"/>
    <property type="match status" value="1"/>
</dbReference>
<dbReference type="Gene3D" id="3.90.1030.10">
    <property type="entry name" value="Ribosomal protein L17"/>
    <property type="match status" value="1"/>
</dbReference>
<dbReference type="HAMAP" id="MF_01368">
    <property type="entry name" value="Ribosomal_bL17"/>
    <property type="match status" value="1"/>
</dbReference>
<dbReference type="InterPro" id="IPR000456">
    <property type="entry name" value="Ribosomal_bL17"/>
</dbReference>
<dbReference type="InterPro" id="IPR047859">
    <property type="entry name" value="Ribosomal_bL17_CS"/>
</dbReference>
<dbReference type="InterPro" id="IPR036373">
    <property type="entry name" value="Ribosomal_bL17_sf"/>
</dbReference>
<dbReference type="NCBIfam" id="TIGR00059">
    <property type="entry name" value="L17"/>
    <property type="match status" value="1"/>
</dbReference>
<dbReference type="PANTHER" id="PTHR14413:SF16">
    <property type="entry name" value="LARGE RIBOSOMAL SUBUNIT PROTEIN BL17M"/>
    <property type="match status" value="1"/>
</dbReference>
<dbReference type="PANTHER" id="PTHR14413">
    <property type="entry name" value="RIBOSOMAL PROTEIN L17"/>
    <property type="match status" value="1"/>
</dbReference>
<dbReference type="Pfam" id="PF01196">
    <property type="entry name" value="Ribosomal_L17"/>
    <property type="match status" value="1"/>
</dbReference>
<dbReference type="SUPFAM" id="SSF64263">
    <property type="entry name" value="Prokaryotic ribosomal protein L17"/>
    <property type="match status" value="1"/>
</dbReference>
<dbReference type="PROSITE" id="PS01167">
    <property type="entry name" value="RIBOSOMAL_L17"/>
    <property type="match status" value="1"/>
</dbReference>
<protein>
    <recommendedName>
        <fullName evidence="1">Large ribosomal subunit protein bL17</fullName>
    </recommendedName>
    <alternativeName>
        <fullName evidence="2">50S ribosomal protein L17</fullName>
    </alternativeName>
</protein>
<reference key="1">
    <citation type="journal article" date="2006" name="Proc. Natl. Acad. Sci. U.S.A.">
        <title>Burkholderia xenovorans LB400 harbors a multi-replicon, 9.73-Mbp genome shaped for versatility.</title>
        <authorList>
            <person name="Chain P.S.G."/>
            <person name="Denef V.J."/>
            <person name="Konstantinidis K.T."/>
            <person name="Vergez L.M."/>
            <person name="Agullo L."/>
            <person name="Reyes V.L."/>
            <person name="Hauser L."/>
            <person name="Cordova M."/>
            <person name="Gomez L."/>
            <person name="Gonzalez M."/>
            <person name="Land M."/>
            <person name="Lao V."/>
            <person name="Larimer F."/>
            <person name="LiPuma J.J."/>
            <person name="Mahenthiralingam E."/>
            <person name="Malfatti S.A."/>
            <person name="Marx C.J."/>
            <person name="Parnell J.J."/>
            <person name="Ramette A."/>
            <person name="Richardson P."/>
            <person name="Seeger M."/>
            <person name="Smith D."/>
            <person name="Spilker T."/>
            <person name="Sul W.J."/>
            <person name="Tsoi T.V."/>
            <person name="Ulrich L.E."/>
            <person name="Zhulin I.B."/>
            <person name="Tiedje J.M."/>
        </authorList>
    </citation>
    <scope>NUCLEOTIDE SEQUENCE [LARGE SCALE GENOMIC DNA]</scope>
    <source>
        <strain>LB400</strain>
    </source>
</reference>
<keyword id="KW-1185">Reference proteome</keyword>
<keyword id="KW-0687">Ribonucleoprotein</keyword>
<keyword id="KW-0689">Ribosomal protein</keyword>